<feature type="chain" id="PRO_0000417339" description="NAD-dependent protein deacylase">
    <location>
        <begin position="1"/>
        <end position="274"/>
    </location>
</feature>
<feature type="domain" description="Deacetylase sirtuin-type" evidence="2">
    <location>
        <begin position="4"/>
        <end position="274"/>
    </location>
</feature>
<feature type="active site" description="Proton acceptor" evidence="2">
    <location>
        <position position="129"/>
    </location>
</feature>
<feature type="binding site" evidence="1">
    <location>
        <begin position="29"/>
        <end position="48"/>
    </location>
    <ligand>
        <name>NAD(+)</name>
        <dbReference type="ChEBI" id="CHEBI:57540"/>
    </ligand>
</feature>
<feature type="binding site" evidence="1">
    <location>
        <position position="73"/>
    </location>
    <ligand>
        <name>substrate</name>
    </ligand>
</feature>
<feature type="binding site" evidence="1">
    <location>
        <position position="76"/>
    </location>
    <ligand>
        <name>substrate</name>
    </ligand>
</feature>
<feature type="binding site" evidence="1">
    <location>
        <begin position="111"/>
        <end position="114"/>
    </location>
    <ligand>
        <name>NAD(+)</name>
        <dbReference type="ChEBI" id="CHEBI:57540"/>
    </ligand>
</feature>
<feature type="binding site" evidence="1">
    <location>
        <position position="137"/>
    </location>
    <ligand>
        <name>Zn(2+)</name>
        <dbReference type="ChEBI" id="CHEBI:29105"/>
    </ligand>
</feature>
<feature type="binding site" evidence="1">
    <location>
        <position position="140"/>
    </location>
    <ligand>
        <name>Zn(2+)</name>
        <dbReference type="ChEBI" id="CHEBI:29105"/>
    </ligand>
</feature>
<feature type="binding site" evidence="1">
    <location>
        <position position="178"/>
    </location>
    <ligand>
        <name>Zn(2+)</name>
        <dbReference type="ChEBI" id="CHEBI:29105"/>
    </ligand>
</feature>
<feature type="binding site" evidence="1">
    <location>
        <position position="183"/>
    </location>
    <ligand>
        <name>Zn(2+)</name>
        <dbReference type="ChEBI" id="CHEBI:29105"/>
    </ligand>
</feature>
<feature type="binding site" evidence="1">
    <location>
        <begin position="220"/>
        <end position="222"/>
    </location>
    <ligand>
        <name>NAD(+)</name>
        <dbReference type="ChEBI" id="CHEBI:57540"/>
    </ligand>
</feature>
<feature type="binding site" evidence="1">
    <location>
        <begin position="246"/>
        <end position="248"/>
    </location>
    <ligand>
        <name>NAD(+)</name>
        <dbReference type="ChEBI" id="CHEBI:57540"/>
    </ligand>
</feature>
<feature type="binding site" evidence="1">
    <location>
        <position position="264"/>
    </location>
    <ligand>
        <name>NAD(+)</name>
        <dbReference type="ChEBI" id="CHEBI:57540"/>
    </ligand>
</feature>
<dbReference type="EC" id="2.3.1.-" evidence="1"/>
<dbReference type="EMBL" id="GL732539">
    <property type="protein sequence ID" value="EFX82664.1"/>
    <property type="molecule type" value="Genomic_DNA"/>
</dbReference>
<dbReference type="SMR" id="E9GD30"/>
<dbReference type="STRING" id="6669.E9GD30"/>
<dbReference type="KEGG" id="dpx:DAPPUDRAFT_195469"/>
<dbReference type="eggNOG" id="KOG2684">
    <property type="taxonomic scope" value="Eukaryota"/>
</dbReference>
<dbReference type="HOGENOM" id="CLU_023643_3_1_1"/>
<dbReference type="InParanoid" id="E9GD30"/>
<dbReference type="OMA" id="LIHMHGE"/>
<dbReference type="OrthoDB" id="424302at2759"/>
<dbReference type="PhylomeDB" id="E9GD30"/>
<dbReference type="Proteomes" id="UP000000305">
    <property type="component" value="Unassembled WGS sequence"/>
</dbReference>
<dbReference type="GO" id="GO:0005829">
    <property type="term" value="C:cytosol"/>
    <property type="evidence" value="ECO:0000318"/>
    <property type="project" value="GO_Central"/>
</dbReference>
<dbReference type="GO" id="GO:0005759">
    <property type="term" value="C:mitochondrial matrix"/>
    <property type="evidence" value="ECO:0000318"/>
    <property type="project" value="GO_Central"/>
</dbReference>
<dbReference type="GO" id="GO:0005739">
    <property type="term" value="C:mitochondrion"/>
    <property type="evidence" value="ECO:0000318"/>
    <property type="project" value="GO_Central"/>
</dbReference>
<dbReference type="GO" id="GO:0005634">
    <property type="term" value="C:nucleus"/>
    <property type="evidence" value="ECO:0000318"/>
    <property type="project" value="GO_Central"/>
</dbReference>
<dbReference type="GO" id="GO:0017136">
    <property type="term" value="F:histone deacetylase activity, NAD-dependent"/>
    <property type="evidence" value="ECO:0000318"/>
    <property type="project" value="GO_Central"/>
</dbReference>
<dbReference type="GO" id="GO:0070403">
    <property type="term" value="F:NAD+ binding"/>
    <property type="evidence" value="ECO:0000318"/>
    <property type="project" value="GO_Central"/>
</dbReference>
<dbReference type="GO" id="GO:0061697">
    <property type="term" value="F:protein-glutaryllysine deglutarylase activity"/>
    <property type="evidence" value="ECO:0000318"/>
    <property type="project" value="GO_Central"/>
</dbReference>
<dbReference type="GO" id="GO:0036054">
    <property type="term" value="F:protein-malonyllysine demalonylase activity"/>
    <property type="evidence" value="ECO:0000318"/>
    <property type="project" value="GO_Central"/>
</dbReference>
<dbReference type="GO" id="GO:0036055">
    <property type="term" value="F:protein-succinyllysine desuccinylase activity"/>
    <property type="evidence" value="ECO:0000318"/>
    <property type="project" value="GO_Central"/>
</dbReference>
<dbReference type="GO" id="GO:0008270">
    <property type="term" value="F:zinc ion binding"/>
    <property type="evidence" value="ECO:0007669"/>
    <property type="project" value="UniProtKB-UniRule"/>
</dbReference>
<dbReference type="CDD" id="cd01412">
    <property type="entry name" value="SIRT5_Af1_CobB"/>
    <property type="match status" value="1"/>
</dbReference>
<dbReference type="Gene3D" id="3.30.1600.10">
    <property type="entry name" value="SIR2/SIRT2 'Small Domain"/>
    <property type="match status" value="1"/>
</dbReference>
<dbReference type="Gene3D" id="3.40.50.1220">
    <property type="entry name" value="TPP-binding domain"/>
    <property type="match status" value="1"/>
</dbReference>
<dbReference type="HAMAP" id="MF_01121">
    <property type="entry name" value="Sirtuin_ClassIII"/>
    <property type="match status" value="1"/>
</dbReference>
<dbReference type="InterPro" id="IPR029035">
    <property type="entry name" value="DHS-like_NAD/FAD-binding_dom"/>
</dbReference>
<dbReference type="InterPro" id="IPR050134">
    <property type="entry name" value="NAD-dep_sirtuin_deacylases"/>
</dbReference>
<dbReference type="InterPro" id="IPR003000">
    <property type="entry name" value="Sirtuin"/>
</dbReference>
<dbReference type="InterPro" id="IPR026591">
    <property type="entry name" value="Sirtuin_cat_small_dom_sf"/>
</dbReference>
<dbReference type="InterPro" id="IPR027546">
    <property type="entry name" value="Sirtuin_class_III"/>
</dbReference>
<dbReference type="InterPro" id="IPR026590">
    <property type="entry name" value="Ssirtuin_cat_dom"/>
</dbReference>
<dbReference type="NCBIfam" id="NF001753">
    <property type="entry name" value="PRK00481.1-3"/>
    <property type="match status" value="1"/>
</dbReference>
<dbReference type="PANTHER" id="PTHR11085">
    <property type="entry name" value="NAD-DEPENDENT PROTEIN DEACYLASE SIRTUIN-5, MITOCHONDRIAL-RELATED"/>
    <property type="match status" value="1"/>
</dbReference>
<dbReference type="PANTHER" id="PTHR11085:SF10">
    <property type="entry name" value="NAD-DEPENDENT PROTEIN DEACYLASE SIRTUIN-5, MITOCHONDRIAL-RELATED"/>
    <property type="match status" value="1"/>
</dbReference>
<dbReference type="Pfam" id="PF02146">
    <property type="entry name" value="SIR2"/>
    <property type="match status" value="1"/>
</dbReference>
<dbReference type="SUPFAM" id="SSF52467">
    <property type="entry name" value="DHS-like NAD/FAD-binding domain"/>
    <property type="match status" value="1"/>
</dbReference>
<dbReference type="PROSITE" id="PS50305">
    <property type="entry name" value="SIRTUIN"/>
    <property type="match status" value="1"/>
</dbReference>
<name>SIR5_DAPPU</name>
<proteinExistence type="inferred from homology"/>
<evidence type="ECO:0000255" key="1">
    <source>
        <dbReference type="HAMAP-Rule" id="MF_03160"/>
    </source>
</evidence>
<evidence type="ECO:0000255" key="2">
    <source>
        <dbReference type="PROSITE-ProRule" id="PRU00236"/>
    </source>
</evidence>
<keyword id="KW-0479">Metal-binding</keyword>
<keyword id="KW-0496">Mitochondrion</keyword>
<keyword id="KW-0520">NAD</keyword>
<keyword id="KW-1185">Reference proteome</keyword>
<keyword id="KW-0808">Transferase</keyword>
<keyword id="KW-0862">Zinc</keyword>
<comment type="function">
    <text evidence="1">NAD-dependent lysine demalonylase, desuccinylase and deglutarylase that specifically removes malonyl, succinyl and glutaryl groups on target proteins. Has weak NAD-dependent protein deacetylase activity; however this activity may not be physiologically relevant in vivo.</text>
</comment>
<comment type="catalytic activity">
    <reaction evidence="1">
        <text>N(6)-malonyl-L-lysyl-[protein] + NAD(+) + H2O = 2''-O-malonyl-ADP-D-ribose + nicotinamide + L-lysyl-[protein]</text>
        <dbReference type="Rhea" id="RHEA:47672"/>
        <dbReference type="Rhea" id="RHEA-COMP:9752"/>
        <dbReference type="Rhea" id="RHEA-COMP:11878"/>
        <dbReference type="ChEBI" id="CHEBI:15377"/>
        <dbReference type="ChEBI" id="CHEBI:17154"/>
        <dbReference type="ChEBI" id="CHEBI:29969"/>
        <dbReference type="ChEBI" id="CHEBI:57540"/>
        <dbReference type="ChEBI" id="CHEBI:87831"/>
        <dbReference type="ChEBI" id="CHEBI:87833"/>
    </reaction>
</comment>
<comment type="catalytic activity">
    <reaction evidence="1">
        <text>N(6)-succinyl-L-lysyl-[protein] + NAD(+) + H2O = 2''-O-succinyl-ADP-D-ribose + nicotinamide + L-lysyl-[protein]</text>
        <dbReference type="Rhea" id="RHEA:47668"/>
        <dbReference type="Rhea" id="RHEA-COMP:9752"/>
        <dbReference type="Rhea" id="RHEA-COMP:11877"/>
        <dbReference type="ChEBI" id="CHEBI:15377"/>
        <dbReference type="ChEBI" id="CHEBI:17154"/>
        <dbReference type="ChEBI" id="CHEBI:29969"/>
        <dbReference type="ChEBI" id="CHEBI:57540"/>
        <dbReference type="ChEBI" id="CHEBI:87830"/>
        <dbReference type="ChEBI" id="CHEBI:87832"/>
    </reaction>
</comment>
<comment type="catalytic activity">
    <reaction evidence="1">
        <text>N(6)-glutaryl-L-lysyl-[protein] + NAD(+) + H2O = 2''-O-glutaryl-ADP-D-ribose + nicotinamide + L-lysyl-[protein]</text>
        <dbReference type="Rhea" id="RHEA:47664"/>
        <dbReference type="Rhea" id="RHEA-COMP:9752"/>
        <dbReference type="Rhea" id="RHEA-COMP:11875"/>
        <dbReference type="ChEBI" id="CHEBI:15377"/>
        <dbReference type="ChEBI" id="CHEBI:17154"/>
        <dbReference type="ChEBI" id="CHEBI:29969"/>
        <dbReference type="ChEBI" id="CHEBI:57540"/>
        <dbReference type="ChEBI" id="CHEBI:87828"/>
        <dbReference type="ChEBI" id="CHEBI:87829"/>
    </reaction>
</comment>
<comment type="cofactor">
    <cofactor evidence="1">
        <name>Zn(2+)</name>
        <dbReference type="ChEBI" id="CHEBI:29105"/>
    </cofactor>
    <text evidence="1">Binds 1 zinc ion per subunit.</text>
</comment>
<comment type="subcellular location">
    <subcellularLocation>
        <location evidence="1">Mitochondrion</location>
    </subcellularLocation>
</comment>
<comment type="domain">
    <text evidence="1">In contrast to class I sirtuins, class III sirtuins have only weak deacetylase activity. Difference in substrate specificity is probably due to a larger hydrophobic pocket with 2 residues (Tyr-73 and Arg-76) that bind to malonylated and succinylated substrates and define the specificity.</text>
</comment>
<comment type="miscellaneous">
    <text evidence="1">This protein may be expected to contain an N-terminal transit peptide but none has been predicted.</text>
</comment>
<comment type="similarity">
    <text evidence="1">Belongs to the sirtuin family. Class III subfamily.</text>
</comment>
<organism>
    <name type="scientific">Daphnia pulex</name>
    <name type="common">Water flea</name>
    <dbReference type="NCBI Taxonomy" id="6669"/>
    <lineage>
        <taxon>Eukaryota</taxon>
        <taxon>Metazoa</taxon>
        <taxon>Ecdysozoa</taxon>
        <taxon>Arthropoda</taxon>
        <taxon>Crustacea</taxon>
        <taxon>Branchiopoda</taxon>
        <taxon>Diplostraca</taxon>
        <taxon>Cladocera</taxon>
        <taxon>Anomopoda</taxon>
        <taxon>Daphniidae</taxon>
        <taxon>Daphnia</taxon>
    </lineage>
</organism>
<reference key="1">
    <citation type="journal article" date="2011" name="Science">
        <title>The ecoresponsive genome of Daphnia pulex.</title>
        <authorList>
            <person name="Colbourne J.K."/>
            <person name="Pfrender M.E."/>
            <person name="Gilbert D."/>
            <person name="Thomas W.K."/>
            <person name="Tucker A."/>
            <person name="Oakley T.H."/>
            <person name="Tokishita S."/>
            <person name="Aerts A."/>
            <person name="Arnold G.J."/>
            <person name="Basu M.K."/>
            <person name="Bauer D.J."/>
            <person name="Caceres C.E."/>
            <person name="Carmel L."/>
            <person name="Casola C."/>
            <person name="Choi J.H."/>
            <person name="Detter J.C."/>
            <person name="Dong Q."/>
            <person name="Dusheyko S."/>
            <person name="Eads B.D."/>
            <person name="Frohlich T."/>
            <person name="Geiler-Samerotte K.A."/>
            <person name="Gerlach D."/>
            <person name="Hatcher P."/>
            <person name="Jogdeo S."/>
            <person name="Krijgsveld J."/>
            <person name="Kriventseva E.V."/>
            <person name="Kultz D."/>
            <person name="Laforsch C."/>
            <person name="Lindquist E."/>
            <person name="Lopez J."/>
            <person name="Manak J.R."/>
            <person name="Muller J."/>
            <person name="Pangilinan J."/>
            <person name="Patwardhan R.P."/>
            <person name="Pitluck S."/>
            <person name="Pritham E.J."/>
            <person name="Rechtsteiner A."/>
            <person name="Rho M."/>
            <person name="Rogozin I.B."/>
            <person name="Sakarya O."/>
            <person name="Salamov A."/>
            <person name="Schaack S."/>
            <person name="Shapiro H."/>
            <person name="Shiga Y."/>
            <person name="Skalitzky C."/>
            <person name="Smith Z."/>
            <person name="Souvorov A."/>
            <person name="Sung W."/>
            <person name="Tang Z."/>
            <person name="Tsuchiya D."/>
            <person name="Tu H."/>
            <person name="Vos H."/>
            <person name="Wang M."/>
            <person name="Wolf Y.I."/>
            <person name="Yamagata H."/>
            <person name="Yamada T."/>
            <person name="Ye Y."/>
            <person name="Shaw J.R."/>
            <person name="Andrews J."/>
            <person name="Crease T.J."/>
            <person name="Tang H."/>
            <person name="Lucas S.M."/>
            <person name="Robertson H.M."/>
            <person name="Bork P."/>
            <person name="Koonin E.V."/>
            <person name="Zdobnov E.M."/>
            <person name="Grigoriev I.V."/>
            <person name="Lynch M."/>
            <person name="Boore J.L."/>
        </authorList>
    </citation>
    <scope>NUCLEOTIDE SEQUENCE [LARGE SCALE GENOMIC DNA]</scope>
</reference>
<accession>E9GD30</accession>
<sequence>MSDCLLPSSDMDAFRKILKKANSVVILTGAGVSAESGVPTFRGAGGLWRTYSAQNLATPSAFRSNPSLVWEFYHHRRENMASKSPNNAHNAIAEFEHRMTKEGRHVSVITQNIDELHQRAGSVNVLELHGSLFKTRCLKCKKIEPNHDSPICEALRGKGSPSPNEVGELVPESLLPRCKVSSCGGLLRPHVVWFHENLDSAVLKKADEELNSCDLCLVVGTSSVVYPAAMFAPQVAERGVPVAEFNMETTAATHHFGFHFSGPCGELLPKALAP</sequence>
<protein>
    <recommendedName>
        <fullName evidence="1">NAD-dependent protein deacylase</fullName>
        <ecNumber evidence="1">2.3.1.-</ecNumber>
    </recommendedName>
    <alternativeName>
        <fullName evidence="1">Regulatory protein SIR2 homolog 5</fullName>
    </alternativeName>
</protein>
<gene>
    <name type="ORF">DAPPUDRAFT_195469</name>
</gene>